<feature type="chain" id="PRO_0000255826" description="Pyridoxal 5'-phosphate synthase subunit PdxT">
    <location>
        <begin position="1"/>
        <end position="191"/>
    </location>
</feature>
<feature type="active site" description="Nucleophile" evidence="1">
    <location>
        <position position="78"/>
    </location>
</feature>
<feature type="active site" description="Charge relay system" evidence="1">
    <location>
        <position position="170"/>
    </location>
</feature>
<feature type="active site" description="Charge relay system" evidence="1">
    <location>
        <position position="172"/>
    </location>
</feature>
<feature type="binding site" evidence="1">
    <location>
        <begin position="46"/>
        <end position="48"/>
    </location>
    <ligand>
        <name>L-glutamine</name>
        <dbReference type="ChEBI" id="CHEBI:58359"/>
    </ligand>
</feature>
<feature type="binding site" evidence="1">
    <location>
        <position position="105"/>
    </location>
    <ligand>
        <name>L-glutamine</name>
        <dbReference type="ChEBI" id="CHEBI:58359"/>
    </ligand>
</feature>
<feature type="binding site" evidence="1">
    <location>
        <begin position="134"/>
        <end position="135"/>
    </location>
    <ligand>
        <name>L-glutamine</name>
        <dbReference type="ChEBI" id="CHEBI:58359"/>
    </ligand>
</feature>
<sequence>MKIGVIAMQGAFREHEQTLARLGVETLRIRRPEQLSQIDGIIIPGGESTTIGKLLGDFNLMEPLRERILSGLPVFGTCAGMILLAKEIENSNQPRIGTMDIKVARNAFGRQVDSFEVDLEIPEVGQEPVRAVFIRAPYILEVKPSVQVLAKVDDKIVMARQDNMLVSAFHPELTDDLRIHRYFIEKVCKGL</sequence>
<organism>
    <name type="scientific">Carboxydothermus hydrogenoformans (strain ATCC BAA-161 / DSM 6008 / Z-2901)</name>
    <dbReference type="NCBI Taxonomy" id="246194"/>
    <lineage>
        <taxon>Bacteria</taxon>
        <taxon>Bacillati</taxon>
        <taxon>Bacillota</taxon>
        <taxon>Clostridia</taxon>
        <taxon>Thermoanaerobacterales</taxon>
        <taxon>Thermoanaerobacteraceae</taxon>
        <taxon>Carboxydothermus</taxon>
    </lineage>
</organism>
<reference key="1">
    <citation type="journal article" date="2005" name="PLoS Genet.">
        <title>Life in hot carbon monoxide: the complete genome sequence of Carboxydothermus hydrogenoformans Z-2901.</title>
        <authorList>
            <person name="Wu M."/>
            <person name="Ren Q."/>
            <person name="Durkin A.S."/>
            <person name="Daugherty S.C."/>
            <person name="Brinkac L.M."/>
            <person name="Dodson R.J."/>
            <person name="Madupu R."/>
            <person name="Sullivan S.A."/>
            <person name="Kolonay J.F."/>
            <person name="Nelson W.C."/>
            <person name="Tallon L.J."/>
            <person name="Jones K.M."/>
            <person name="Ulrich L.E."/>
            <person name="Gonzalez J.M."/>
            <person name="Zhulin I.B."/>
            <person name="Robb F.T."/>
            <person name="Eisen J.A."/>
        </authorList>
    </citation>
    <scope>NUCLEOTIDE SEQUENCE [LARGE SCALE GENOMIC DNA]</scope>
    <source>
        <strain>ATCC BAA-161 / DSM 6008 / Z-2901</strain>
    </source>
</reference>
<proteinExistence type="inferred from homology"/>
<comment type="function">
    <text evidence="1">Catalyzes the hydrolysis of glutamine to glutamate and ammonia as part of the biosynthesis of pyridoxal 5'-phosphate. The resulting ammonia molecule is channeled to the active site of PdxS.</text>
</comment>
<comment type="catalytic activity">
    <reaction evidence="1">
        <text>aldehydo-D-ribose 5-phosphate + D-glyceraldehyde 3-phosphate + L-glutamine = pyridoxal 5'-phosphate + L-glutamate + phosphate + 3 H2O + H(+)</text>
        <dbReference type="Rhea" id="RHEA:31507"/>
        <dbReference type="ChEBI" id="CHEBI:15377"/>
        <dbReference type="ChEBI" id="CHEBI:15378"/>
        <dbReference type="ChEBI" id="CHEBI:29985"/>
        <dbReference type="ChEBI" id="CHEBI:43474"/>
        <dbReference type="ChEBI" id="CHEBI:58273"/>
        <dbReference type="ChEBI" id="CHEBI:58359"/>
        <dbReference type="ChEBI" id="CHEBI:59776"/>
        <dbReference type="ChEBI" id="CHEBI:597326"/>
        <dbReference type="EC" id="4.3.3.6"/>
    </reaction>
</comment>
<comment type="catalytic activity">
    <reaction evidence="1">
        <text>L-glutamine + H2O = L-glutamate + NH4(+)</text>
        <dbReference type="Rhea" id="RHEA:15889"/>
        <dbReference type="ChEBI" id="CHEBI:15377"/>
        <dbReference type="ChEBI" id="CHEBI:28938"/>
        <dbReference type="ChEBI" id="CHEBI:29985"/>
        <dbReference type="ChEBI" id="CHEBI:58359"/>
        <dbReference type="EC" id="3.5.1.2"/>
    </reaction>
</comment>
<comment type="pathway">
    <text evidence="1">Cofactor biosynthesis; pyridoxal 5'-phosphate biosynthesis.</text>
</comment>
<comment type="subunit">
    <text evidence="1">In the presence of PdxS, forms a dodecamer of heterodimers. Only shows activity in the heterodimer.</text>
</comment>
<comment type="similarity">
    <text evidence="1">Belongs to the glutaminase PdxT/SNO family.</text>
</comment>
<dbReference type="EC" id="4.3.3.6" evidence="1"/>
<dbReference type="EC" id="3.5.1.2" evidence="1"/>
<dbReference type="EMBL" id="CP000141">
    <property type="protein sequence ID" value="ABB13687.1"/>
    <property type="molecule type" value="Genomic_DNA"/>
</dbReference>
<dbReference type="RefSeq" id="WP_011345555.1">
    <property type="nucleotide sequence ID" value="NC_007503.1"/>
</dbReference>
<dbReference type="SMR" id="Q3A8Q0"/>
<dbReference type="FunCoup" id="Q3A8Q0">
    <property type="interactions" value="199"/>
</dbReference>
<dbReference type="STRING" id="246194.CHY_2702"/>
<dbReference type="MEROPS" id="C26.A32"/>
<dbReference type="KEGG" id="chy:CHY_2702"/>
<dbReference type="eggNOG" id="COG0311">
    <property type="taxonomic scope" value="Bacteria"/>
</dbReference>
<dbReference type="HOGENOM" id="CLU_069674_2_0_9"/>
<dbReference type="InParanoid" id="Q3A8Q0"/>
<dbReference type="OrthoDB" id="9810320at2"/>
<dbReference type="UniPathway" id="UPA00245"/>
<dbReference type="Proteomes" id="UP000002706">
    <property type="component" value="Chromosome"/>
</dbReference>
<dbReference type="GO" id="GO:0005829">
    <property type="term" value="C:cytosol"/>
    <property type="evidence" value="ECO:0007669"/>
    <property type="project" value="TreeGrafter"/>
</dbReference>
<dbReference type="GO" id="GO:1903600">
    <property type="term" value="C:glutaminase complex"/>
    <property type="evidence" value="ECO:0007669"/>
    <property type="project" value="TreeGrafter"/>
</dbReference>
<dbReference type="GO" id="GO:0004359">
    <property type="term" value="F:glutaminase activity"/>
    <property type="evidence" value="ECO:0007669"/>
    <property type="project" value="UniProtKB-UniRule"/>
</dbReference>
<dbReference type="GO" id="GO:0036381">
    <property type="term" value="F:pyridoxal 5'-phosphate synthase (glutamine hydrolysing) activity"/>
    <property type="evidence" value="ECO:0007669"/>
    <property type="project" value="UniProtKB-UniRule"/>
</dbReference>
<dbReference type="GO" id="GO:0006543">
    <property type="term" value="P:glutamine catabolic process"/>
    <property type="evidence" value="ECO:0007669"/>
    <property type="project" value="UniProtKB-UniRule"/>
</dbReference>
<dbReference type="GO" id="GO:0042823">
    <property type="term" value="P:pyridoxal phosphate biosynthetic process"/>
    <property type="evidence" value="ECO:0007669"/>
    <property type="project" value="UniProtKB-UniRule"/>
</dbReference>
<dbReference type="GO" id="GO:0008614">
    <property type="term" value="P:pyridoxine metabolic process"/>
    <property type="evidence" value="ECO:0007669"/>
    <property type="project" value="TreeGrafter"/>
</dbReference>
<dbReference type="CDD" id="cd01749">
    <property type="entry name" value="GATase1_PB"/>
    <property type="match status" value="1"/>
</dbReference>
<dbReference type="FunFam" id="3.40.50.880:FF:000010">
    <property type="entry name" value="uncharacterized protein LOC100176842 isoform X2"/>
    <property type="match status" value="1"/>
</dbReference>
<dbReference type="Gene3D" id="3.40.50.880">
    <property type="match status" value="1"/>
</dbReference>
<dbReference type="HAMAP" id="MF_01615">
    <property type="entry name" value="PdxT"/>
    <property type="match status" value="1"/>
</dbReference>
<dbReference type="InterPro" id="IPR029062">
    <property type="entry name" value="Class_I_gatase-like"/>
</dbReference>
<dbReference type="InterPro" id="IPR002161">
    <property type="entry name" value="PdxT/SNO"/>
</dbReference>
<dbReference type="InterPro" id="IPR021196">
    <property type="entry name" value="PdxT/SNO_CS"/>
</dbReference>
<dbReference type="NCBIfam" id="TIGR03800">
    <property type="entry name" value="PLP_synth_Pdx2"/>
    <property type="match status" value="1"/>
</dbReference>
<dbReference type="PANTHER" id="PTHR31559">
    <property type="entry name" value="PYRIDOXAL 5'-PHOSPHATE SYNTHASE SUBUNIT SNO"/>
    <property type="match status" value="1"/>
</dbReference>
<dbReference type="PANTHER" id="PTHR31559:SF0">
    <property type="entry name" value="PYRIDOXAL 5'-PHOSPHATE SYNTHASE SUBUNIT SNO1-RELATED"/>
    <property type="match status" value="1"/>
</dbReference>
<dbReference type="Pfam" id="PF01174">
    <property type="entry name" value="SNO"/>
    <property type="match status" value="1"/>
</dbReference>
<dbReference type="PIRSF" id="PIRSF005639">
    <property type="entry name" value="Glut_amidoT_SNO"/>
    <property type="match status" value="1"/>
</dbReference>
<dbReference type="SUPFAM" id="SSF52317">
    <property type="entry name" value="Class I glutamine amidotransferase-like"/>
    <property type="match status" value="1"/>
</dbReference>
<dbReference type="PROSITE" id="PS01236">
    <property type="entry name" value="PDXT_SNO_1"/>
    <property type="match status" value="1"/>
</dbReference>
<dbReference type="PROSITE" id="PS51130">
    <property type="entry name" value="PDXT_SNO_2"/>
    <property type="match status" value="1"/>
</dbReference>
<evidence type="ECO:0000255" key="1">
    <source>
        <dbReference type="HAMAP-Rule" id="MF_01615"/>
    </source>
</evidence>
<protein>
    <recommendedName>
        <fullName evidence="1">Pyridoxal 5'-phosphate synthase subunit PdxT</fullName>
        <ecNumber evidence="1">4.3.3.6</ecNumber>
    </recommendedName>
    <alternativeName>
        <fullName evidence="1">Pdx2</fullName>
    </alternativeName>
    <alternativeName>
        <fullName evidence="1">Pyridoxal 5'-phosphate synthase glutaminase subunit</fullName>
        <ecNumber evidence="1">3.5.1.2</ecNumber>
    </alternativeName>
</protein>
<name>PDXT_CARHZ</name>
<gene>
    <name evidence="1" type="primary">pdxT</name>
    <name type="ordered locus">CHY_2702</name>
</gene>
<keyword id="KW-0315">Glutamine amidotransferase</keyword>
<keyword id="KW-0378">Hydrolase</keyword>
<keyword id="KW-0456">Lyase</keyword>
<keyword id="KW-0663">Pyridoxal phosphate</keyword>
<keyword id="KW-1185">Reference proteome</keyword>
<accession>Q3A8Q0</accession>